<organism>
    <name type="scientific">African swine fever virus (strain Badajoz 1971 Vero-adapted)</name>
    <name type="common">Ba71V</name>
    <name type="synonym">ASFV</name>
    <dbReference type="NCBI Taxonomy" id="10498"/>
    <lineage>
        <taxon>Viruses</taxon>
        <taxon>Varidnaviria</taxon>
        <taxon>Bamfordvirae</taxon>
        <taxon>Nucleocytoviricota</taxon>
        <taxon>Pokkesviricetes</taxon>
        <taxon>Asfuvirales</taxon>
        <taxon>Asfarviridae</taxon>
        <taxon>Asfivirus</taxon>
        <taxon>African swine fever virus</taxon>
    </lineage>
</organism>
<dbReference type="EC" id="2.3.2.23" evidence="4"/>
<dbReference type="EMBL" id="M77121">
    <property type="protein sequence ID" value="AAA42704.1"/>
    <property type="molecule type" value="Genomic_DNA"/>
</dbReference>
<dbReference type="EMBL" id="U18466">
    <property type="protein sequence ID" value="AAA65370.1"/>
    <property type="molecule type" value="Genomic_DNA"/>
</dbReference>
<dbReference type="PIR" id="F39448">
    <property type="entry name" value="UQXFAS"/>
</dbReference>
<dbReference type="RefSeq" id="NP_042834.1">
    <property type="nucleotide sequence ID" value="NC_001659.2"/>
</dbReference>
<dbReference type="SMR" id="P27949"/>
<dbReference type="GeneID" id="22220370"/>
<dbReference type="KEGG" id="vg:22220370"/>
<dbReference type="UniPathway" id="UPA00143"/>
<dbReference type="Proteomes" id="UP000000624">
    <property type="component" value="Segment"/>
</dbReference>
<dbReference type="GO" id="GO:0030430">
    <property type="term" value="C:host cell cytoplasm"/>
    <property type="evidence" value="ECO:0007669"/>
    <property type="project" value="UniProtKB-SubCell"/>
</dbReference>
<dbReference type="GO" id="GO:0042025">
    <property type="term" value="C:host cell nucleus"/>
    <property type="evidence" value="ECO:0007669"/>
    <property type="project" value="UniProtKB-SubCell"/>
</dbReference>
<dbReference type="GO" id="GO:0044423">
    <property type="term" value="C:virion component"/>
    <property type="evidence" value="ECO:0007669"/>
    <property type="project" value="UniProtKB-KW"/>
</dbReference>
<dbReference type="GO" id="GO:0005524">
    <property type="term" value="F:ATP binding"/>
    <property type="evidence" value="ECO:0007669"/>
    <property type="project" value="UniProtKB-KW"/>
</dbReference>
<dbReference type="GO" id="GO:0061631">
    <property type="term" value="F:ubiquitin conjugating enzyme activity"/>
    <property type="evidence" value="ECO:0007669"/>
    <property type="project" value="UniProtKB-EC"/>
</dbReference>
<dbReference type="GO" id="GO:0016567">
    <property type="term" value="P:protein ubiquitination"/>
    <property type="evidence" value="ECO:0007669"/>
    <property type="project" value="UniProtKB-UniPathway"/>
</dbReference>
<dbReference type="GO" id="GO:0085034">
    <property type="term" value="P:symbiont-mediated suppression of host NF-kappaB cascade"/>
    <property type="evidence" value="ECO:0007669"/>
    <property type="project" value="UniProtKB-KW"/>
</dbReference>
<dbReference type="FunFam" id="3.10.110.10:FF:000051">
    <property type="entry name" value="ubiquitin-conjugating enzyme E2 R2-like"/>
    <property type="match status" value="1"/>
</dbReference>
<dbReference type="Gene3D" id="3.10.110.10">
    <property type="entry name" value="Ubiquitin Conjugating Enzyme"/>
    <property type="match status" value="1"/>
</dbReference>
<dbReference type="InterPro" id="IPR050113">
    <property type="entry name" value="Ub_conjugating_enzyme"/>
</dbReference>
<dbReference type="InterPro" id="IPR000608">
    <property type="entry name" value="UBQ-conjugat_E2_core"/>
</dbReference>
<dbReference type="InterPro" id="IPR023313">
    <property type="entry name" value="UBQ-conjugating_AS"/>
</dbReference>
<dbReference type="InterPro" id="IPR016135">
    <property type="entry name" value="UBQ-conjugating_enzyme/RWD"/>
</dbReference>
<dbReference type="PANTHER" id="PTHR24067">
    <property type="entry name" value="UBIQUITIN-CONJUGATING ENZYME E2"/>
    <property type="match status" value="1"/>
</dbReference>
<dbReference type="Pfam" id="PF00179">
    <property type="entry name" value="UQ_con"/>
    <property type="match status" value="1"/>
</dbReference>
<dbReference type="SMART" id="SM00212">
    <property type="entry name" value="UBCc"/>
    <property type="match status" value="1"/>
</dbReference>
<dbReference type="SUPFAM" id="SSF54495">
    <property type="entry name" value="UBC-like"/>
    <property type="match status" value="1"/>
</dbReference>
<dbReference type="PROSITE" id="PS00183">
    <property type="entry name" value="UBC_1"/>
    <property type="match status" value="1"/>
</dbReference>
<dbReference type="PROSITE" id="PS50127">
    <property type="entry name" value="UBC_2"/>
    <property type="match status" value="1"/>
</dbReference>
<gene>
    <name type="primary">UBC</name>
    <name type="ordered locus">BA71V-144</name>
    <name type="ORF">I215L</name>
</gene>
<keyword id="KW-0067">ATP-binding</keyword>
<keyword id="KW-0244">Early protein</keyword>
<keyword id="KW-1035">Host cytoplasm</keyword>
<keyword id="KW-1048">Host nucleus</keyword>
<keyword id="KW-0945">Host-virus interaction</keyword>
<keyword id="KW-1100">Inhibition of host NF-kappa-B by virus</keyword>
<keyword id="KW-0426">Late protein</keyword>
<keyword id="KW-0547">Nucleotide-binding</keyword>
<keyword id="KW-1185">Reference proteome</keyword>
<keyword id="KW-0808">Transferase</keyword>
<keyword id="KW-0833">Ubl conjugation pathway</keyword>
<keyword id="KW-0946">Virion</keyword>
<comment type="function">
    <text evidence="4 6 7 8 9">Accepts ubiquitin from the E1 complex and catalyzes its covalent attachment to other proteins (PubMed:29472632). Performs the second step in the ubiquitination reaction that targets specifically a protein for degradation via the proteasome (PubMed:29472632). By controlling the ubiquitination status of specific host proteins, the virus may target them to degradation and thereby optimize the viral replication (PubMed:29472632). May be implicated in the shutoff of protein synthesis through its interactions with components of the host translation machinery (PubMed:33384682). Blocks host RELA nuclear translocation upon cytokine stimulation, thereby impairing NF-kappa-B signaling (PubMed:34204411). Inhibits type I IFN production and 'Lys-63'-linked polyubiquitination of host TBK1 through binding to host RNF138. This binding enhances the interaction between RNF138 and RNF128 and promotes RNF138-mediated degradation of RNF128 (PubMed:34759016). Also inhibits the activation of AP-1 transcription factor (PubMed:34204411). Monoubiquitinates the viral protein P15/PIG1 in vitro (PubMed:7853518).</text>
</comment>
<comment type="catalytic activity">
    <reaction evidence="4">
        <text>S-ubiquitinyl-[E1 ubiquitin-activating enzyme]-L-cysteine + [E2 ubiquitin-conjugating enzyme]-L-cysteine = [E1 ubiquitin-activating enzyme]-L-cysteine + S-ubiquitinyl-[E2 ubiquitin-conjugating enzyme]-L-cysteine.</text>
        <dbReference type="EC" id="2.3.2.23"/>
    </reaction>
</comment>
<comment type="cofactor">
    <cofactor evidence="4">
        <name>Mg(2+)</name>
        <dbReference type="ChEBI" id="CHEBI:18420"/>
    </cofactor>
    <text evidence="4">Binds Mn2+ ion which is required for highest activity. Can also utilize Mg2+ ions.</text>
</comment>
<comment type="biophysicochemical properties">
    <phDependence>
        <text evidence="4">Optimum pH is 7.5.</text>
    </phDependence>
    <temperatureDependence>
        <text evidence="4">Optimum temperature is 37 degrees Celsius.</text>
    </temperatureDependence>
</comment>
<comment type="pathway">
    <text evidence="2 4">Protein modification; protein ubiquitination.</text>
</comment>
<comment type="subunit">
    <text evidence="6 8">Interacts with host 40S ribosomal protein RPS23 (PubMed:33384682). Interacts with host translation initiation factor EIF4E (PubMed:33384682). Interacts with host E3 ubiquitin ligase CUL4B (PubMed:33384682). Interacts with host RNF138 (PubMed:34759016).</text>
</comment>
<comment type="subcellular location">
    <subcellularLocation>
        <location evidence="4">Host cytoplasm</location>
    </subcellularLocation>
    <subcellularLocation>
        <location evidence="4">Host nucleus</location>
    </subcellularLocation>
    <subcellularLocation>
        <location evidence="1">Virion</location>
    </subcellularLocation>
    <text evidence="4">Accumulates in the perinuclear cytoplasmic viral factories. Faintly detected in the nucleus.</text>
</comment>
<comment type="induction">
    <text evidence="4 5 6">Expressed in the early phase of the viral replicative cycle (PubMed:29472632, PubMed:32075923, PubMed:33384682). Detected at 2-4 hpi onwards, recruited to viral factories from 8 hpi and expressed until 24 hpi, increasing its concentration throughout the infection with a maximum at 16 hpi (PubMed:29472632, PubMed:33384682).</text>
</comment>
<comment type="disruption phenotype">
    <text evidence="4">Knockdown impairs viral infection, with lower number of synthesized viral genomes and lower viral progeny.</text>
</comment>
<comment type="similarity">
    <text evidence="2">Belongs to the ubiquitin-conjugating enzyme family.</text>
</comment>
<reference key="1">
    <citation type="journal article" date="1992" name="Virology">
        <title>Genes homologous to ubiquitin-conjugating proteins and eukaryotic transcription factor SII in African swine fever virus.</title>
        <authorList>
            <person name="Rodriguez J.M."/>
            <person name="Salas M.L."/>
            <person name="Vinuela E."/>
        </authorList>
    </citation>
    <scope>NUCLEOTIDE SEQUENCE [GENOMIC DNA]</scope>
    <scope>INDUCTION</scope>
</reference>
<reference key="2">
    <citation type="journal article" date="1995" name="Virology">
        <title>Analysis of the complete nucleotide sequence of African swine fever virus.</title>
        <authorList>
            <person name="Yanez R.J."/>
            <person name="Rodriguez J.M."/>
            <person name="Nogal M.L."/>
            <person name="Yuste L."/>
            <person name="Enriquez C."/>
            <person name="Rodriguez J.F."/>
            <person name="Vinuela E."/>
        </authorList>
    </citation>
    <scope>NUCLEOTIDE SEQUENCE [LARGE SCALE GENOMIC DNA]</scope>
</reference>
<reference key="3">
    <citation type="journal article" date="1995" name="J. Virol.">
        <title>Characterization of a ubiquitinated protein which is externally located in African swine fever virions.</title>
        <authorList>
            <person name="Hingamp P.M."/>
            <person name="Leyland M.L."/>
            <person name="Webb J."/>
            <person name="Twigger S."/>
            <person name="Mayer R.J."/>
            <person name="Dixon L.K."/>
        </authorList>
    </citation>
    <scope>FUNCTION</scope>
</reference>
<reference key="4">
    <citation type="journal article" date="2018" name="Sci. Rep.">
        <title>African swine fever virus encodes for an E2-ubiquitin conjugating enzyme that is mono- and di-ubiquitinated and required for viral replication cycle.</title>
        <authorList>
            <person name="Freitas F.B."/>
            <person name="Frouco G."/>
            <person name="Martins C."/>
            <person name="Ferreira F."/>
        </authorList>
    </citation>
    <scope>FUNCTION</scope>
    <scope>BIOPHYSICOCHEMICAL PROPERTIES</scope>
    <scope>SUBCELLULAR LOCATION</scope>
    <scope>COFACTOR</scope>
    <scope>MUTAGENESIS OF CYS-85; CYS-162 AND CYS-189</scope>
    <scope>INDUCTION</scope>
    <scope>DISRUPTION PHENOTYPE</scope>
    <scope>CATALYTIC ACTIVITY</scope>
    <scope>ACTIVE SITE</scope>
</reference>
<reference key="5">
    <citation type="journal article" date="2020" name="J. Virol.">
        <title>The African Swine Fever Virus Transcriptome.</title>
        <authorList>
            <person name="Cackett G."/>
            <person name="Matelska D."/>
            <person name="Sykora M."/>
            <person name="Portugal R."/>
            <person name="Malecki M."/>
            <person name="Baehler J."/>
            <person name="Dixon L."/>
            <person name="Werner F."/>
        </authorList>
    </citation>
    <scope>INDUCTION</scope>
</reference>
<reference key="6">
    <citation type="journal article" date="2020" name="Front. Microbiol.">
        <title>African Swine Fever Virus Ubiquitin-Conjugating Enzyme Interacts With Host Translation Machinery to Regulate the Host Protein Synthesis.</title>
        <authorList>
            <person name="Barrado-Gil L."/>
            <person name="Del Puerto A."/>
            <person name="Munoz-Moreno R."/>
            <person name="Galindo I."/>
            <person name="Cuesta-Geijo M.A."/>
            <person name="Urquiza J."/>
            <person name="Nistal-Villan E."/>
            <person name="Maluquer de Motes C."/>
            <person name="Alonso C."/>
        </authorList>
    </citation>
    <scope>FUNCTION</scope>
    <scope>INTERACTION WITH HOST RPS23</scope>
    <scope>INTERACTION WITH HOST EIF4E</scope>
    <scope>INTERACTION WITH HOST CUL4B</scope>
    <scope>INDUCTION</scope>
</reference>
<reference key="7">
    <citation type="journal article" date="2021" name="Viruses">
        <title>African Swine Fever Virus Ubiquitin-Conjugating Enzyme Is an Immunomodulator Targeting NF-kappaB Activation.</title>
        <authorList>
            <person name="Barrado-Gil L."/>
            <person name="Del Puerto A."/>
            <person name="Galindo I."/>
            <person name="Cuesta-Geijo M.A."/>
            <person name="Garcia-Dorival I."/>
            <person name="de Motes C.M."/>
            <person name="Alonso C."/>
        </authorList>
    </citation>
    <scope>FUNCTION</scope>
    <scope>MUTAGENESIS OF CYS-85</scope>
</reference>
<reference key="8">
    <citation type="journal article" date="2021" name="J. Immunol.">
        <title>African Swine Fever Virus pI215L Negatively Regulates cGAS-STING Signaling Pathway through Recruiting RNF138 to Inhibit K63-Linked Ubiquitination of TBK1.</title>
        <authorList>
            <person name="Huang L."/>
            <person name="Xu W."/>
            <person name="Liu H."/>
            <person name="Xue M."/>
            <person name="Liu X."/>
            <person name="Zhang K."/>
            <person name="Hu L."/>
            <person name="Li J."/>
            <person name="Liu X."/>
            <person name="Xiang Z."/>
            <person name="Zheng J."/>
            <person name="Li C."/>
            <person name="Chen W."/>
            <person name="Bu Z."/>
            <person name="Xiong T."/>
            <person name="Weng C."/>
        </authorList>
    </citation>
    <scope>FUNCTION</scope>
    <scope>INTERACTION WITH HOST RNF138</scope>
    <scope>MUTAGENESIS OF CYS-85</scope>
</reference>
<organismHost>
    <name type="scientific">Ornithodoros</name>
    <name type="common">relapsing fever ticks</name>
    <dbReference type="NCBI Taxonomy" id="6937"/>
</organismHost>
<organismHost>
    <name type="scientific">Sus scrofa</name>
    <name type="common">Pig</name>
    <dbReference type="NCBI Taxonomy" id="9823"/>
</organismHost>
<sequence>MVSRFLIAEYRHLIENPSENFKISVNENNITEWDVILRGPPDTLYEGGLFKAKVAFPPEYPYAPPKLTFTSEMWHPNIYPDGRLCISILHGDNAEEQGMTWSPAQKIDTILLSVISLLNEPNPDSPANVDAAKSYRKYVYKEDLESYPMEVKKTVKKSLDECSPEDIEYFKNAASNVPPIPSDAYEDECEEMEDDTYILTYDDDEEEEDEEMDDE</sequence>
<feature type="chain" id="PRO_0000082591" description="Ubiquitin-conjugating enzyme E2">
    <location>
        <begin position="1"/>
        <end position="215"/>
    </location>
</feature>
<feature type="domain" description="UBC core" evidence="2">
    <location>
        <begin position="1"/>
        <end position="160"/>
    </location>
</feature>
<feature type="active site" description="Glycyl thioester intermediate" evidence="2 3 4">
    <location>
        <position position="85"/>
    </location>
</feature>
<feature type="mutagenesis site" description="Complete loss of thioester bond with ubiquitin. No effect on the NF-kappa-B and iNF inhibitory function." evidence="4 7 8">
    <original>C</original>
    <variation>A</variation>
    <location>
        <position position="85"/>
    </location>
</feature>
<feature type="mutagenesis site" description="No effet on the formation of the thioester bond with ubiquitin." evidence="4">
    <original>C</original>
    <variation>A</variation>
    <location>
        <position position="162"/>
    </location>
</feature>
<feature type="mutagenesis site" description="No effet on the formation of the thioester bond with ubiquitin." evidence="4">
    <original>C</original>
    <variation>A</variation>
    <location>
        <position position="189"/>
    </location>
</feature>
<protein>
    <recommendedName>
        <fullName>Ubiquitin-conjugating enzyme E2</fullName>
        <ecNumber evidence="4">2.3.2.23</ecNumber>
    </recommendedName>
    <alternativeName>
        <fullName>E2 ubiquitin-conjugating enzyme</fullName>
    </alternativeName>
    <alternativeName>
        <fullName evidence="11">UBCv1</fullName>
    </alternativeName>
    <alternativeName>
        <fullName>Ubiquitin carrier protein</fullName>
    </alternativeName>
    <alternativeName>
        <fullName>Ubiquitin-protein ligase</fullName>
    </alternativeName>
    <alternativeName>
        <fullName evidence="10">pI215L</fullName>
    </alternativeName>
</protein>
<proteinExistence type="evidence at protein level"/>
<evidence type="ECO:0000250" key="1">
    <source>
        <dbReference type="UniProtKB" id="P25869"/>
    </source>
</evidence>
<evidence type="ECO:0000255" key="2">
    <source>
        <dbReference type="PROSITE-ProRule" id="PRU00388"/>
    </source>
</evidence>
<evidence type="ECO:0000255" key="3">
    <source>
        <dbReference type="PROSITE-ProRule" id="PRU10133"/>
    </source>
</evidence>
<evidence type="ECO:0000269" key="4">
    <source>
    </source>
</evidence>
<evidence type="ECO:0000269" key="5">
    <source>
    </source>
</evidence>
<evidence type="ECO:0000269" key="6">
    <source>
    </source>
</evidence>
<evidence type="ECO:0000269" key="7">
    <source>
    </source>
</evidence>
<evidence type="ECO:0000269" key="8">
    <source>
    </source>
</evidence>
<evidence type="ECO:0000269" key="9">
    <source>
    </source>
</evidence>
<evidence type="ECO:0000303" key="10">
    <source>
    </source>
</evidence>
<evidence type="ECO:0000303" key="11">
    <source>
    </source>
</evidence>
<name>UBC_ASFB7</name>
<accession>P27949</accession>